<reference key="1">
    <citation type="journal article" date="2002" name="Mol. Pharmacol.">
        <title>A novel human nicotinic receptor subunit, alpha10, that confers functionality to the alpha9-subunit.</title>
        <authorList>
            <person name="Sgard F."/>
            <person name="Charpantier E."/>
            <person name="Bertrand S."/>
            <person name="Walker N."/>
            <person name="Caput D."/>
            <person name="Graham D."/>
            <person name="Bertrand D."/>
            <person name="Besnard F."/>
        </authorList>
    </citation>
    <scope>NUCLEOTIDE SEQUENCE [MRNA]</scope>
    <scope>FUNCTION</scope>
    <scope>INTERACTION WITH CHRNA9</scope>
    <scope>TISSUE SPECIFICITY</scope>
    <source>
        <tissue>Skeletal muscle</tissue>
    </source>
</reference>
<reference key="2">
    <citation type="journal article" date="2001" name="Genomics">
        <title>Molecular cloning and mapping of the human nicotinic acetylcholine receptor alpha10 (CHRNA10).</title>
        <authorList>
            <person name="Lustig L.R."/>
            <person name="Peng H."/>
            <person name="Hiel H."/>
            <person name="Yamamoto T."/>
            <person name="Fuchs P.A."/>
        </authorList>
    </citation>
    <scope>NUCLEOTIDE SEQUENCE [GENOMIC DNA]</scope>
    <source>
        <tissue>Inner ear</tissue>
        <tissue>Tonsil</tissue>
    </source>
</reference>
<reference key="3">
    <citation type="submission" date="2000-11" db="EMBL/GenBank/DDBJ databases">
        <title>Identification and functional characterisation of a novel human neuronal nicotinic acetylcholine receptor subunit alpha 10.</title>
        <authorList>
            <person name="Vandenberk I."/>
            <person name="van der Helm L."/>
            <person name="Nieuwstraten D.M."/>
            <person name="Verfaille C."/>
            <person name="Kremer A."/>
            <person name="van der Spek P."/>
            <person name="Masure S."/>
            <person name="Hoefnagel E."/>
            <person name="Yon J."/>
            <person name="Groot Kormelink P.J."/>
            <person name="Luyten W.H."/>
            <person name="Grantham C.J."/>
        </authorList>
    </citation>
    <scope>NUCLEOTIDE SEQUENCE [MRNA]</scope>
</reference>
<reference key="4">
    <citation type="journal article" date="2004" name="Life Sci.">
        <title>Characterization of the human nicotinic acetylcholine receptor subunit alpha (alpha) 9 (CHRNA9) and alpha (alpha) 10 (CHRNA10) in lymphocytes.</title>
        <authorList>
            <person name="Peng H."/>
            <person name="Ferris R.L."/>
            <person name="Matthews T."/>
            <person name="Hiel H."/>
            <person name="Lopez-Albaitero A."/>
            <person name="Lustig L.R."/>
        </authorList>
    </citation>
    <scope>TISSUE SPECIFICITY</scope>
    <scope>FUNCTION</scope>
</reference>
<reference key="5">
    <citation type="journal article" date="2009" name="Neuropharmacology">
        <title>Diversity of vertebrate nicotinic acetylcholine receptors.</title>
        <authorList>
            <person name="Millar N.S."/>
            <person name="Gotti C."/>
        </authorList>
    </citation>
    <scope>REVIEW ON NACHRS DIVERSITY</scope>
</reference>
<reference key="6">
    <citation type="journal article" date="2015" name="Sci. Rep.">
        <title>Conotoxin alphaD-GeXXA utilizes a novel strategy to antagonize nicotinic acetylcholine receptors.</title>
        <authorList>
            <person name="Xu S."/>
            <person name="Zhang T."/>
            <person name="Kompella S.N."/>
            <person name="Yan M."/>
            <person name="Lu A."/>
            <person name="Wang Y."/>
            <person name="Shao X."/>
            <person name="Chi C."/>
            <person name="Adams D.J."/>
            <person name="Ding J."/>
            <person name="Wang C."/>
        </authorList>
    </citation>
    <scope>MUTAGENESIS OF LEU-31</scope>
    <scope>INTERACTION WITH THE CONOTOXIN GEXXA</scope>
</reference>
<accession>Q9GZZ6</accession>
<name>ACH10_HUMAN</name>
<organism>
    <name type="scientific">Homo sapiens</name>
    <name type="common">Human</name>
    <dbReference type="NCBI Taxonomy" id="9606"/>
    <lineage>
        <taxon>Eukaryota</taxon>
        <taxon>Metazoa</taxon>
        <taxon>Chordata</taxon>
        <taxon>Craniata</taxon>
        <taxon>Vertebrata</taxon>
        <taxon>Euteleostomi</taxon>
        <taxon>Mammalia</taxon>
        <taxon>Eutheria</taxon>
        <taxon>Euarchontoglires</taxon>
        <taxon>Primates</taxon>
        <taxon>Haplorrhini</taxon>
        <taxon>Catarrhini</taxon>
        <taxon>Hominidae</taxon>
        <taxon>Homo</taxon>
    </lineage>
</organism>
<comment type="function">
    <text evidence="4 7 8 11">Component of neuronal acetylcholine receptors (nAChRs) that function as pentameric, ligand-gated cation channels with high calcium permeability. nAChRs are excitatory neurotrasnmitter receptors formed by a collection of nAChR subunits. Each nAchR subunit confers differential attributes to channel properties, including activation, deactivation and desensitization kinetics, pH sensitivity, cation permeability, and binding to allosteric modulators (Probable). Forms heteropentamers with CHRNA9. Expressed in the inner ear, in sympathetic neurons and in other non-neuronal cells, such as skin keratinocytes and lymphocytes (PubMed:11752216, PubMed:15531379). nAChR formed by CHRNA9:CHRNA10 is involved in modulation of auditory stimuli. The channel is permeable to a range of divalent cations including calcium, the influx of which may activate a potassium current which hyperpolarizes the cell membrane. In the ear, mediates synaptic transmission between efferent olivocochlear fibers and hair cells of the cochlea, this may lead to a reduction in basilar membrane motion, altering the activity of auditory nerve fibers and reducing the range of dynamic hearing (PubMed:11752216). This may protect against acoustic trauma. May also regulate keratinocyte adhesion (By similarity).</text>
</comment>
<comment type="catalytic activity">
    <reaction evidence="7">
        <text>Ca(2+)(in) = Ca(2+)(out)</text>
        <dbReference type="Rhea" id="RHEA:29671"/>
        <dbReference type="ChEBI" id="CHEBI:29108"/>
    </reaction>
</comment>
<comment type="catalytic activity">
    <reaction evidence="2">
        <text>K(+)(in) = K(+)(out)</text>
        <dbReference type="Rhea" id="RHEA:29463"/>
        <dbReference type="ChEBI" id="CHEBI:29103"/>
    </reaction>
</comment>
<comment type="catalytic activity">
    <reaction evidence="2">
        <text>Na(+)(in) = Na(+)(out)</text>
        <dbReference type="Rhea" id="RHEA:34963"/>
        <dbReference type="ChEBI" id="CHEBI:29101"/>
    </reaction>
</comment>
<comment type="catalytic activity">
    <reaction evidence="3">
        <text>Mg(2+)(in) = Mg(2+)(out)</text>
        <dbReference type="Rhea" id="RHEA:29827"/>
        <dbReference type="ChEBI" id="CHEBI:18420"/>
    </reaction>
</comment>
<comment type="activity regulation">
    <text evidence="7 9">Activated by a myriad of ligands such as acetylcholine (PubMed:11752216). AChR activity is inhibited by the antagonists alpha-conotoxins RgIA and GeXXA, small disulfide-constrained peptides from cone snails (PubMed:26395518).</text>
</comment>
<comment type="subunit">
    <text evidence="3 7">Forms homo- or heterooligomeric channels in conjunction with CHRNA10. The native outer hair cell receptor may be composed of CHRNA9:CHRNA10 heterooligomers (PubMed:11752216). Found in the stoichiometric form (CHRNA9)2:(CHRNA10)3 (By similarity).</text>
</comment>
<comment type="subcellular location">
    <subcellularLocation>
        <location evidence="3">Synaptic cell membrane</location>
        <topology evidence="5">Multi-pass membrane protein</topology>
    </subcellularLocation>
    <subcellularLocation>
        <location evidence="3">Cell membrane</location>
        <topology evidence="5">Multi-pass membrane protein</topology>
    </subcellularLocation>
</comment>
<comment type="tissue specificity">
    <text evidence="7 8">Expressed in inner-ear tissue, tonsil, immortalized B-cells, cultured T-cells and peripheral blood lymphocytes.</text>
</comment>
<comment type="miscellaneous">
    <text>The heterooligomeric receptor composed of CHRNA9 and CHRNA10 has an atypical pharmacological profile, binding several non-nicotinic ligands including strychnine (a glycine receptor antagonist) and atropine (a muscarinic acetylcholine receptor antagonist).</text>
</comment>
<comment type="similarity">
    <text evidence="10">Belongs to the ligand-gated ion channel (TC 1.A.9) family. Acetylcholine receptor (TC 1.A.9.1) subfamily. Alpha-10/CHRNA10 sub-subfamily.</text>
</comment>
<keyword id="KW-0106">Calcium</keyword>
<keyword id="KW-0107">Calcium channel</keyword>
<keyword id="KW-0109">Calcium transport</keyword>
<keyword id="KW-1003">Cell membrane</keyword>
<keyword id="KW-1015">Disulfide bond</keyword>
<keyword id="KW-0325">Glycoprotein</keyword>
<keyword id="KW-0407">Ion channel</keyword>
<keyword id="KW-0406">Ion transport</keyword>
<keyword id="KW-1071">Ligand-gated ion channel</keyword>
<keyword id="KW-0472">Membrane</keyword>
<keyword id="KW-0675">Receptor</keyword>
<keyword id="KW-1185">Reference proteome</keyword>
<keyword id="KW-0732">Signal</keyword>
<keyword id="KW-0770">Synapse</keyword>
<keyword id="KW-0812">Transmembrane</keyword>
<keyword id="KW-1133">Transmembrane helix</keyword>
<keyword id="KW-0813">Transport</keyword>
<proteinExistence type="evidence at protein level"/>
<protein>
    <recommendedName>
        <fullName>Neuronal acetylcholine receptor subunit alpha-10</fullName>
    </recommendedName>
    <alternativeName>
        <fullName>Nicotinic acetylcholine receptor subunit alpha-10</fullName>
        <shortName>NACHR alpha-10</shortName>
    </alternativeName>
</protein>
<feature type="signal peptide" evidence="5">
    <location>
        <begin position="1"/>
        <end position="24"/>
    </location>
</feature>
<feature type="chain" id="PRO_0000000376" description="Neuronal acetylcholine receptor subunit alpha-10">
    <location>
        <begin position="25"/>
        <end position="450"/>
    </location>
</feature>
<feature type="topological domain" description="Extracellular" evidence="5">
    <location>
        <begin position="25"/>
        <end position="237"/>
    </location>
</feature>
<feature type="transmembrane region" description="Helical" evidence="5">
    <location>
        <begin position="238"/>
        <end position="258"/>
    </location>
</feature>
<feature type="transmembrane region" description="Helical" evidence="5">
    <location>
        <begin position="268"/>
        <end position="288"/>
    </location>
</feature>
<feature type="transmembrane region" description="Helical" evidence="5">
    <location>
        <begin position="302"/>
        <end position="322"/>
    </location>
</feature>
<feature type="topological domain" description="Cytoplasmic" evidence="5">
    <location>
        <begin position="323"/>
        <end position="428"/>
    </location>
</feature>
<feature type="transmembrane region" description="Helical" evidence="5">
    <location>
        <begin position="429"/>
        <end position="449"/>
    </location>
</feature>
<feature type="region of interest" description="Disordered" evidence="6">
    <location>
        <begin position="355"/>
        <end position="380"/>
    </location>
</feature>
<feature type="glycosylation site" description="N-linked (GlcNAc...) asparagine" evidence="5">
    <location>
        <position position="40"/>
    </location>
</feature>
<feature type="glycosylation site" description="N-linked (GlcNAc...) asparagine" evidence="5">
    <location>
        <position position="56"/>
    </location>
</feature>
<feature type="disulfide bond" evidence="1">
    <location>
        <begin position="154"/>
        <end position="168"/>
    </location>
</feature>
<feature type="disulfide bond" description="Associated with receptor activation" evidence="1">
    <location>
        <begin position="218"/>
        <end position="219"/>
    </location>
</feature>
<feature type="sequence variant" id="VAR_048172" description="In dbSNP:rs2231547.">
    <original>E</original>
    <variation>A</variation>
    <location>
        <position position="355"/>
    </location>
</feature>
<feature type="mutagenesis site" description="11-fold increase in inhibition of the AChR composed of subunits CHRNA9 and CHRNA10 by the conotoxin GEXXA, and no change in activity on mAChR composed of subunits CHRNA9 and CHRNA10 by the competitive conotoxin Vc1A." evidence="9">
    <original>L</original>
    <variation>H</variation>
    <location>
        <position position="31"/>
    </location>
</feature>
<sequence>MGLRSHHLSLGLLLLFLLPAECLGAEGRLALKLFRDLFANYTSALRPVADTDQTLNVTLEVTLSQIIDMDERNQVLTLYLWIRQEWTDAYLRWDPNAYGGLDAIRIPSSLVWRPDIVLYNKADAQPPGSASTNVVLRHDGAVRWDAPAITRSSCRVDVAAFPFDAQHCGLTFGSWTHGGHQLDVRPRGAAASLADFVENVEWRVLGMPARRRVLTYGCCSEPYPDVTFTLLLRRRAAAYVCNLLLPCVLISLLAPLAFHLPADSGEKVSLGVTVLLALTVFQLLLAESMPPAESVPLIGKYYMATMTMVTFSTALTILIMNLHYCGPSVRPVPAWARALLLGHLARGLCVRERGEPCGQSRPPELSPSPQSPEGGAGPPAGPCHEPRCLCRQEALLHHVATIANTFRSHRAAQRCHEDWKRLARVMDRFFLAIFFSMALVMSLLVLVQAL</sequence>
<gene>
    <name evidence="12" type="primary">CHRNA10</name>
    <name type="synonym">NACHRA10</name>
</gene>
<dbReference type="EMBL" id="AJ278118">
    <property type="protein sequence ID" value="CAC20435.1"/>
    <property type="molecule type" value="mRNA"/>
</dbReference>
<dbReference type="EMBL" id="AF199235">
    <property type="protein sequence ID" value="AAG00795.2"/>
    <property type="molecule type" value="mRNA"/>
</dbReference>
<dbReference type="EMBL" id="AF327367">
    <property type="protein sequence ID" value="AAK14333.1"/>
    <property type="molecule type" value="Genomic_DNA"/>
</dbReference>
<dbReference type="EMBL" id="AJ295237">
    <property type="protein sequence ID" value="CAC16144.1"/>
    <property type="molecule type" value="mRNA"/>
</dbReference>
<dbReference type="CCDS" id="CCDS7745.1"/>
<dbReference type="RefSeq" id="NP_001289963.1">
    <property type="nucleotide sequence ID" value="NM_001303034.1"/>
</dbReference>
<dbReference type="RefSeq" id="NP_001289964.1">
    <property type="nucleotide sequence ID" value="NM_001303035.1"/>
</dbReference>
<dbReference type="RefSeq" id="NP_065135.2">
    <property type="nucleotide sequence ID" value="NM_020402.3"/>
</dbReference>
<dbReference type="SMR" id="Q9GZZ6"/>
<dbReference type="BioGRID" id="121345">
    <property type="interactions" value="18"/>
</dbReference>
<dbReference type="ComplexPortal" id="CPX-2171">
    <property type="entry name" value="Neuronal nicotinic acetylcholine receptor complex, alpha9-alpha10"/>
</dbReference>
<dbReference type="CORUM" id="Q9GZZ6"/>
<dbReference type="FunCoup" id="Q9GZZ6">
    <property type="interactions" value="373"/>
</dbReference>
<dbReference type="IntAct" id="Q9GZZ6">
    <property type="interactions" value="8"/>
</dbReference>
<dbReference type="STRING" id="9606.ENSP00000250699"/>
<dbReference type="BindingDB" id="Q9GZZ6"/>
<dbReference type="ChEMBL" id="CHEMBL2109238"/>
<dbReference type="DrugBank" id="DB05724">
    <property type="generic name" value="alpha-Conotoxin VC 1.1"/>
</dbReference>
<dbReference type="DrugBank" id="DB05069">
    <property type="generic name" value="ATG003"/>
</dbReference>
<dbReference type="DrugBank" id="DB00237">
    <property type="generic name" value="Butabarbital"/>
</dbReference>
<dbReference type="DrugBank" id="DB00565">
    <property type="generic name" value="Cisatracurium"/>
</dbReference>
<dbReference type="DrugBank" id="DB14783">
    <property type="generic name" value="Diroximel fumarate"/>
</dbReference>
<dbReference type="DrugBank" id="DB00898">
    <property type="generic name" value="Ethanol"/>
</dbReference>
<dbReference type="DrugBank" id="DB05137">
    <property type="generic name" value="Lobeline"/>
</dbReference>
<dbReference type="DrugBank" id="DB00184">
    <property type="generic name" value="Nicotine"/>
</dbReference>
<dbReference type="DrugBank" id="DB01090">
    <property type="generic name" value="Pentolinium"/>
</dbReference>
<dbReference type="DrugBank" id="DB05740">
    <property type="generic name" value="RPI-78M"/>
</dbReference>
<dbReference type="DrugBank" id="DB00202">
    <property type="generic name" value="Succinylcholine"/>
</dbReference>
<dbReference type="DrugBank" id="DB01116">
    <property type="generic name" value="Trimethaphan"/>
</dbReference>
<dbReference type="DrugCentral" id="Q9GZZ6"/>
<dbReference type="GuidetoPHARMACOLOGY" id="470"/>
<dbReference type="TCDB" id="1.A.9.1.22">
    <property type="family name" value="the neurotransmitter receptor, cys loop, ligand-gated ion channel (lic) family"/>
</dbReference>
<dbReference type="GlyCosmos" id="Q9GZZ6">
    <property type="glycosylation" value="2 sites, No reported glycans"/>
</dbReference>
<dbReference type="GlyGen" id="Q9GZZ6">
    <property type="glycosylation" value="2 sites"/>
</dbReference>
<dbReference type="iPTMnet" id="Q9GZZ6"/>
<dbReference type="PhosphoSitePlus" id="Q9GZZ6"/>
<dbReference type="BioMuta" id="CHRNA10"/>
<dbReference type="DMDM" id="14916526"/>
<dbReference type="MassIVE" id="Q9GZZ6"/>
<dbReference type="PaxDb" id="9606-ENSP00000250699"/>
<dbReference type="PeptideAtlas" id="Q9GZZ6"/>
<dbReference type="Antibodypedia" id="57559">
    <property type="antibodies" value="205 antibodies from 25 providers"/>
</dbReference>
<dbReference type="DNASU" id="57053"/>
<dbReference type="Ensembl" id="ENST00000250699.2">
    <property type="protein sequence ID" value="ENSP00000250699.2"/>
    <property type="gene ID" value="ENSG00000129749.3"/>
</dbReference>
<dbReference type="GeneID" id="57053"/>
<dbReference type="KEGG" id="hsa:57053"/>
<dbReference type="MANE-Select" id="ENST00000250699.2">
    <property type="protein sequence ID" value="ENSP00000250699.2"/>
    <property type="RefSeq nucleotide sequence ID" value="NM_020402.4"/>
    <property type="RefSeq protein sequence ID" value="NP_065135.2"/>
</dbReference>
<dbReference type="UCSC" id="uc001lyf.3">
    <property type="organism name" value="human"/>
</dbReference>
<dbReference type="AGR" id="HGNC:13800"/>
<dbReference type="CTD" id="57053"/>
<dbReference type="DisGeNET" id="57053"/>
<dbReference type="GeneCards" id="CHRNA10"/>
<dbReference type="HGNC" id="HGNC:13800">
    <property type="gene designation" value="CHRNA10"/>
</dbReference>
<dbReference type="HPA" id="ENSG00000129749">
    <property type="expression patterns" value="Tissue enriched (skeletal)"/>
</dbReference>
<dbReference type="MIM" id="606372">
    <property type="type" value="gene"/>
</dbReference>
<dbReference type="neXtProt" id="NX_Q9GZZ6"/>
<dbReference type="OpenTargets" id="ENSG00000129749"/>
<dbReference type="PharmGKB" id="PA26488"/>
<dbReference type="VEuPathDB" id="HostDB:ENSG00000129749"/>
<dbReference type="eggNOG" id="KOG3645">
    <property type="taxonomic scope" value="Eukaryota"/>
</dbReference>
<dbReference type="GeneTree" id="ENSGT00940000160721"/>
<dbReference type="HOGENOM" id="CLU_018074_0_0_1"/>
<dbReference type="InParanoid" id="Q9GZZ6"/>
<dbReference type="OMA" id="VENVEWH"/>
<dbReference type="OrthoDB" id="5975154at2759"/>
<dbReference type="PAN-GO" id="Q9GZZ6">
    <property type="GO annotations" value="9 GO annotations based on evolutionary models"/>
</dbReference>
<dbReference type="PhylomeDB" id="Q9GZZ6"/>
<dbReference type="TreeFam" id="TF315605"/>
<dbReference type="PathwayCommons" id="Q9GZZ6"/>
<dbReference type="Reactome" id="R-HSA-9667769">
    <property type="pathway name" value="Acetylcholine inhibits contraction of outer hair cells"/>
</dbReference>
<dbReference type="SignaLink" id="Q9GZZ6"/>
<dbReference type="BioGRID-ORCS" id="57053">
    <property type="hits" value="15 hits in 1153 CRISPR screens"/>
</dbReference>
<dbReference type="GeneWiki" id="CHRNA10"/>
<dbReference type="GenomeRNAi" id="57053"/>
<dbReference type="Pharos" id="Q9GZZ6">
    <property type="development level" value="Tchem"/>
</dbReference>
<dbReference type="PRO" id="PR:Q9GZZ6"/>
<dbReference type="Proteomes" id="UP000005640">
    <property type="component" value="Chromosome 11"/>
</dbReference>
<dbReference type="RNAct" id="Q9GZZ6">
    <property type="molecule type" value="protein"/>
</dbReference>
<dbReference type="Bgee" id="ENSG00000129749">
    <property type="expression patterns" value="Expressed in gastrocnemius and 98 other cell types or tissues"/>
</dbReference>
<dbReference type="ExpressionAtlas" id="Q9GZZ6">
    <property type="expression patterns" value="baseline and differential"/>
</dbReference>
<dbReference type="GO" id="GO:0030424">
    <property type="term" value="C:axon"/>
    <property type="evidence" value="ECO:0007669"/>
    <property type="project" value="Ensembl"/>
</dbReference>
<dbReference type="GO" id="GO:0098981">
    <property type="term" value="C:cholinergic synapse"/>
    <property type="evidence" value="ECO:0007669"/>
    <property type="project" value="Ensembl"/>
</dbReference>
<dbReference type="GO" id="GO:0016020">
    <property type="term" value="C:membrane"/>
    <property type="evidence" value="ECO:0000304"/>
    <property type="project" value="UniProtKB"/>
</dbReference>
<dbReference type="GO" id="GO:0043005">
    <property type="term" value="C:neuron projection"/>
    <property type="evidence" value="ECO:0000318"/>
    <property type="project" value="GO_Central"/>
</dbReference>
<dbReference type="GO" id="GO:0043204">
    <property type="term" value="C:perikaryon"/>
    <property type="evidence" value="ECO:0007669"/>
    <property type="project" value="Ensembl"/>
</dbReference>
<dbReference type="GO" id="GO:0005886">
    <property type="term" value="C:plasma membrane"/>
    <property type="evidence" value="ECO:0000318"/>
    <property type="project" value="GO_Central"/>
</dbReference>
<dbReference type="GO" id="GO:0099634">
    <property type="term" value="C:postsynaptic specialization membrane"/>
    <property type="evidence" value="ECO:0007669"/>
    <property type="project" value="Ensembl"/>
</dbReference>
<dbReference type="GO" id="GO:0045202">
    <property type="term" value="C:synapse"/>
    <property type="evidence" value="ECO:0000318"/>
    <property type="project" value="GO_Central"/>
</dbReference>
<dbReference type="GO" id="GO:1902495">
    <property type="term" value="C:transmembrane transporter complex"/>
    <property type="evidence" value="ECO:0000318"/>
    <property type="project" value="GO_Central"/>
</dbReference>
<dbReference type="GO" id="GO:0022848">
    <property type="term" value="F:acetylcholine-gated monoatomic cation-selective channel activity"/>
    <property type="evidence" value="ECO:0007669"/>
    <property type="project" value="Ensembl"/>
</dbReference>
<dbReference type="GO" id="GO:0005262">
    <property type="term" value="F:calcium channel activity"/>
    <property type="evidence" value="ECO:0007669"/>
    <property type="project" value="UniProtKB-KW"/>
</dbReference>
<dbReference type="GO" id="GO:0005231">
    <property type="term" value="F:excitatory extracellular ligand-gated monoatomic ion channel activity"/>
    <property type="evidence" value="ECO:0000318"/>
    <property type="project" value="GO_Central"/>
</dbReference>
<dbReference type="GO" id="GO:0022850">
    <property type="term" value="F:serotonin-gated monoatomic cation channel activity"/>
    <property type="evidence" value="ECO:0000318"/>
    <property type="project" value="GO_Central"/>
</dbReference>
<dbReference type="GO" id="GO:0005102">
    <property type="term" value="F:signaling receptor binding"/>
    <property type="evidence" value="ECO:0000304"/>
    <property type="project" value="UniProtKB"/>
</dbReference>
<dbReference type="GO" id="GO:1904315">
    <property type="term" value="F:transmitter-gated monoatomic ion channel activity involved in regulation of postsynaptic membrane potential"/>
    <property type="evidence" value="ECO:0000318"/>
    <property type="project" value="GO_Central"/>
</dbReference>
<dbReference type="GO" id="GO:0007268">
    <property type="term" value="P:chemical synaptic transmission"/>
    <property type="evidence" value="ECO:0000318"/>
    <property type="project" value="GO_Central"/>
</dbReference>
<dbReference type="GO" id="GO:0050910">
    <property type="term" value="P:detection of mechanical stimulus involved in sensory perception of sound"/>
    <property type="evidence" value="ECO:0007669"/>
    <property type="project" value="Ensembl"/>
</dbReference>
<dbReference type="GO" id="GO:0042472">
    <property type="term" value="P:inner ear morphogenesis"/>
    <property type="evidence" value="ECO:0007669"/>
    <property type="project" value="Ensembl"/>
</dbReference>
<dbReference type="GO" id="GO:0051899">
    <property type="term" value="P:membrane depolarization"/>
    <property type="evidence" value="ECO:0007669"/>
    <property type="project" value="Ensembl"/>
</dbReference>
<dbReference type="GO" id="GO:0034220">
    <property type="term" value="P:monoatomic ion transmembrane transport"/>
    <property type="evidence" value="ECO:0000318"/>
    <property type="project" value="GO_Central"/>
</dbReference>
<dbReference type="GO" id="GO:0070373">
    <property type="term" value="P:negative regulation of ERK1 and ERK2 cascade"/>
    <property type="evidence" value="ECO:0007669"/>
    <property type="project" value="Ensembl"/>
</dbReference>
<dbReference type="GO" id="GO:0007204">
    <property type="term" value="P:positive regulation of cytosolic calcium ion concentration"/>
    <property type="evidence" value="ECO:0000316"/>
    <property type="project" value="MGI"/>
</dbReference>
<dbReference type="GO" id="GO:0042127">
    <property type="term" value="P:regulation of cell population proliferation"/>
    <property type="evidence" value="ECO:0000304"/>
    <property type="project" value="UniProtKB"/>
</dbReference>
<dbReference type="GO" id="GO:0042391">
    <property type="term" value="P:regulation of membrane potential"/>
    <property type="evidence" value="ECO:0000318"/>
    <property type="project" value="GO_Central"/>
</dbReference>
<dbReference type="GO" id="GO:0010996">
    <property type="term" value="P:response to auditory stimulus"/>
    <property type="evidence" value="ECO:0007669"/>
    <property type="project" value="Ensembl"/>
</dbReference>
<dbReference type="GO" id="GO:0007271">
    <property type="term" value="P:synaptic transmission, cholinergic"/>
    <property type="evidence" value="ECO:0000304"/>
    <property type="project" value="UniProtKB"/>
</dbReference>
<dbReference type="CDD" id="cd19051">
    <property type="entry name" value="LGIC_TM_cation"/>
    <property type="match status" value="1"/>
</dbReference>
<dbReference type="FunFam" id="2.70.170.10:FF:000029">
    <property type="entry name" value="Cholinergic receptor nicotinic alpha 10 subunit"/>
    <property type="match status" value="1"/>
</dbReference>
<dbReference type="FunFam" id="1.20.58.390:FF:000009">
    <property type="entry name" value="Cholinergic receptor nicotinic alpha 9 subunit"/>
    <property type="match status" value="1"/>
</dbReference>
<dbReference type="FunFam" id="1.20.58.390:FF:000045">
    <property type="entry name" value="neuronal acetylcholine receptor subunit alpha-10"/>
    <property type="match status" value="1"/>
</dbReference>
<dbReference type="Gene3D" id="2.70.170.10">
    <property type="entry name" value="Neurotransmitter-gated ion-channel ligand-binding domain"/>
    <property type="match status" value="1"/>
</dbReference>
<dbReference type="Gene3D" id="1.20.58.390">
    <property type="entry name" value="Neurotransmitter-gated ion-channel transmembrane domain"/>
    <property type="match status" value="2"/>
</dbReference>
<dbReference type="InterPro" id="IPR006202">
    <property type="entry name" value="Neur_chan_lig-bd"/>
</dbReference>
<dbReference type="InterPro" id="IPR036734">
    <property type="entry name" value="Neur_chan_lig-bd_sf"/>
</dbReference>
<dbReference type="InterPro" id="IPR006201">
    <property type="entry name" value="Neur_channel"/>
</dbReference>
<dbReference type="InterPro" id="IPR036719">
    <property type="entry name" value="Neuro-gated_channel_TM_sf"/>
</dbReference>
<dbReference type="InterPro" id="IPR038050">
    <property type="entry name" value="Neuro_actylchol_rec"/>
</dbReference>
<dbReference type="InterPro" id="IPR006029">
    <property type="entry name" value="Neurotrans-gated_channel_TM"/>
</dbReference>
<dbReference type="InterPro" id="IPR018000">
    <property type="entry name" value="Neurotransmitter_ion_chnl_CS"/>
</dbReference>
<dbReference type="InterPro" id="IPR002394">
    <property type="entry name" value="Nicotinic_acetylcholine_rcpt"/>
</dbReference>
<dbReference type="NCBIfam" id="TIGR00860">
    <property type="entry name" value="LIC"/>
    <property type="match status" value="1"/>
</dbReference>
<dbReference type="PANTHER" id="PTHR18945">
    <property type="entry name" value="NEUROTRANSMITTER GATED ION CHANNEL"/>
    <property type="match status" value="1"/>
</dbReference>
<dbReference type="Pfam" id="PF02931">
    <property type="entry name" value="Neur_chan_LBD"/>
    <property type="match status" value="1"/>
</dbReference>
<dbReference type="Pfam" id="PF02932">
    <property type="entry name" value="Neur_chan_memb"/>
    <property type="match status" value="1"/>
</dbReference>
<dbReference type="PRINTS" id="PR00254">
    <property type="entry name" value="NICOTINICR"/>
</dbReference>
<dbReference type="PRINTS" id="PR00252">
    <property type="entry name" value="NRIONCHANNEL"/>
</dbReference>
<dbReference type="SUPFAM" id="SSF90112">
    <property type="entry name" value="Neurotransmitter-gated ion-channel transmembrane pore"/>
    <property type="match status" value="1"/>
</dbReference>
<dbReference type="SUPFAM" id="SSF63712">
    <property type="entry name" value="Nicotinic receptor ligand binding domain-like"/>
    <property type="match status" value="1"/>
</dbReference>
<dbReference type="PROSITE" id="PS00236">
    <property type="entry name" value="NEUROTR_ION_CHANNEL"/>
    <property type="match status" value="1"/>
</dbReference>
<evidence type="ECO:0000250" key="1"/>
<evidence type="ECO:0000250" key="2">
    <source>
        <dbReference type="UniProtKB" id="P43144"/>
    </source>
</evidence>
<evidence type="ECO:0000250" key="3">
    <source>
        <dbReference type="UniProtKB" id="Q9JLB5"/>
    </source>
</evidence>
<evidence type="ECO:0000250" key="4">
    <source>
        <dbReference type="UniProtKB" id="Q9UGM1"/>
    </source>
</evidence>
<evidence type="ECO:0000255" key="5"/>
<evidence type="ECO:0000256" key="6">
    <source>
        <dbReference type="SAM" id="MobiDB-lite"/>
    </source>
</evidence>
<evidence type="ECO:0000269" key="7">
    <source>
    </source>
</evidence>
<evidence type="ECO:0000269" key="8">
    <source>
    </source>
</evidence>
<evidence type="ECO:0000269" key="9">
    <source>
    </source>
</evidence>
<evidence type="ECO:0000305" key="10"/>
<evidence type="ECO:0000305" key="11">
    <source>
    </source>
</evidence>
<evidence type="ECO:0000312" key="12">
    <source>
        <dbReference type="HGNC" id="HGNC:13800"/>
    </source>
</evidence>